<organism>
    <name type="scientific">Rattus norvegicus</name>
    <name type="common">Rat</name>
    <dbReference type="NCBI Taxonomy" id="10116"/>
    <lineage>
        <taxon>Eukaryota</taxon>
        <taxon>Metazoa</taxon>
        <taxon>Chordata</taxon>
        <taxon>Craniata</taxon>
        <taxon>Vertebrata</taxon>
        <taxon>Euteleostomi</taxon>
        <taxon>Mammalia</taxon>
        <taxon>Eutheria</taxon>
        <taxon>Euarchontoglires</taxon>
        <taxon>Glires</taxon>
        <taxon>Rodentia</taxon>
        <taxon>Myomorpha</taxon>
        <taxon>Muroidea</taxon>
        <taxon>Muridae</taxon>
        <taxon>Murinae</taxon>
        <taxon>Rattus</taxon>
    </lineage>
</organism>
<proteinExistence type="evidence at transcript level"/>
<name>BTBDG_RAT</name>
<reference key="1">
    <citation type="journal article" date="2004" name="Genome Res.">
        <title>The status, quality, and expansion of the NIH full-length cDNA project: the Mammalian Gene Collection (MGC).</title>
        <authorList>
            <consortium name="The MGC Project Team"/>
        </authorList>
    </citation>
    <scope>NUCLEOTIDE SEQUENCE [LARGE SCALE MRNA]</scope>
    <source>
        <tissue>Testis</tissue>
    </source>
</reference>
<feature type="chain" id="PRO_0000247123" description="BTB/POZ domain-containing protein 16">
    <location>
        <begin position="1"/>
        <end position="506"/>
    </location>
</feature>
<feature type="domain" description="BTB">
    <location>
        <begin position="150"/>
        <end position="206"/>
    </location>
</feature>
<keyword id="KW-1185">Reference proteome</keyword>
<gene>
    <name type="primary">Btbd16</name>
</gene>
<sequence>MKMLNSRKIRMERRIVGATNRWRFPQDHFCGDLLALSQMCNVLNVDLDDALKNPDKLCISKFQKLFTESIMDSGTQSGEADVILDCLGFKWELHHPQIFQSETLAKLYLTALIQNTKSSQRDLEKILKVHSTERMKKRSPVKKIIISLRINDPAVTRVAFALALKNLYMNEVEMTVDNVLGVLASAHILQFNRLFRKCVSTMLNRLTPCTIKNFYLAGCKYKEEQLTNACEKWLAMNLVPLVGTQIHLRHIPEPLLYKVLKSPRLFTFSEFHLLKTLLMWVYLQMNGKVQTLPIHETMLAFFSSFPKKSCFLEQDPGHSWMPLFLCLRLHGITSGKDLEEIKHINFFPESWLVRVTANHYHALESGGNMVHLKDLSTQAMRFGLLFRQEYTTYSETISIYGYFFEIKGIKHDTTSYSFSMQRIRHTDLECPSSVCEHSTISLRSERLVKYEIRAQTLVDGRWQEFGTNQIMQKFGFIKPGCKSHALKIQTVGIPIYASFAFIFPAS</sequence>
<protein>
    <recommendedName>
        <fullName>BTB/POZ domain-containing protein 16</fullName>
    </recommendedName>
</protein>
<accession>Q6AXU1</accession>
<dbReference type="EMBL" id="BC079317">
    <property type="protein sequence ID" value="AAH79317.1"/>
    <property type="molecule type" value="mRNA"/>
</dbReference>
<dbReference type="RefSeq" id="NP_001017464.1">
    <property type="nucleotide sequence ID" value="NM_001017464.2"/>
</dbReference>
<dbReference type="RefSeq" id="XP_063123886.1">
    <property type="nucleotide sequence ID" value="XM_063267816.1"/>
</dbReference>
<dbReference type="FunCoup" id="Q6AXU1">
    <property type="interactions" value="20"/>
</dbReference>
<dbReference type="STRING" id="10116.ENSRNOP00000062948"/>
<dbReference type="PhosphoSitePlus" id="Q6AXU1"/>
<dbReference type="PaxDb" id="10116-ENSRNOP00000062948"/>
<dbReference type="Ensembl" id="ENSRNOT00000067742.3">
    <property type="protein sequence ID" value="ENSRNOP00000062948.1"/>
    <property type="gene ID" value="ENSRNOG00000036675.5"/>
</dbReference>
<dbReference type="GeneID" id="361658"/>
<dbReference type="KEGG" id="rno:361658"/>
<dbReference type="UCSC" id="RGD:1311454">
    <property type="organism name" value="rat"/>
</dbReference>
<dbReference type="AGR" id="RGD:1311454"/>
<dbReference type="CTD" id="118663"/>
<dbReference type="RGD" id="1311454">
    <property type="gene designation" value="Btbd16"/>
</dbReference>
<dbReference type="eggNOG" id="KOG4682">
    <property type="taxonomic scope" value="Eukaryota"/>
</dbReference>
<dbReference type="GeneTree" id="ENSGT00940000161718"/>
<dbReference type="HOGENOM" id="CLU_025904_0_0_1"/>
<dbReference type="InParanoid" id="Q6AXU1"/>
<dbReference type="OMA" id="RHTDLEF"/>
<dbReference type="PRO" id="PR:Q6AXU1"/>
<dbReference type="Proteomes" id="UP000002494">
    <property type="component" value="Chromosome 1"/>
</dbReference>
<dbReference type="Bgee" id="ENSRNOG00000036675">
    <property type="expression patterns" value="Expressed in testis and 5 other cell types or tissues"/>
</dbReference>
<dbReference type="CDD" id="cd18492">
    <property type="entry name" value="BACK_BTBD16"/>
    <property type="match status" value="1"/>
</dbReference>
<dbReference type="Gene3D" id="3.30.710.10">
    <property type="entry name" value="Potassium Channel Kv1.1, Chain A"/>
    <property type="match status" value="1"/>
</dbReference>
<dbReference type="InterPro" id="IPR056426">
    <property type="entry name" value="BTB_BTBDG"/>
</dbReference>
<dbReference type="InterPro" id="IPR042833">
    <property type="entry name" value="BTBD16"/>
</dbReference>
<dbReference type="InterPro" id="IPR048859">
    <property type="entry name" value="BTBD16_C"/>
</dbReference>
<dbReference type="InterPro" id="IPR011333">
    <property type="entry name" value="SKP1/BTB/POZ_sf"/>
</dbReference>
<dbReference type="PANTHER" id="PTHR46843">
    <property type="entry name" value="BTB/POZ DOMAIN-CONTAINING PROTEIN 16"/>
    <property type="match status" value="1"/>
</dbReference>
<dbReference type="PANTHER" id="PTHR46843:SF1">
    <property type="entry name" value="BTB_POZ DOMAIN-CONTAINING PROTEIN 16"/>
    <property type="match status" value="1"/>
</dbReference>
<dbReference type="Pfam" id="PF23998">
    <property type="entry name" value="BTB_BTBDG"/>
    <property type="match status" value="1"/>
</dbReference>
<dbReference type="Pfam" id="PF21059">
    <property type="entry name" value="BTBD16_C"/>
    <property type="match status" value="1"/>
</dbReference>
<dbReference type="SUPFAM" id="SSF54695">
    <property type="entry name" value="POZ domain"/>
    <property type="match status" value="1"/>
</dbReference>